<feature type="chain" id="PRO_0000178187" description="dITP/XTP pyrophosphatase">
    <location>
        <begin position="1"/>
        <end position="203"/>
    </location>
</feature>
<feature type="active site" description="Proton acceptor" evidence="1">
    <location>
        <position position="70"/>
    </location>
</feature>
<feature type="binding site" evidence="1">
    <location>
        <begin position="8"/>
        <end position="13"/>
    </location>
    <ligand>
        <name>substrate</name>
    </ligand>
</feature>
<feature type="binding site" evidence="1">
    <location>
        <position position="41"/>
    </location>
    <ligand>
        <name>Mg(2+)</name>
        <dbReference type="ChEBI" id="CHEBI:18420"/>
    </ligand>
</feature>
<feature type="binding site" evidence="1">
    <location>
        <position position="70"/>
    </location>
    <ligand>
        <name>Mg(2+)</name>
        <dbReference type="ChEBI" id="CHEBI:18420"/>
    </ligand>
</feature>
<feature type="binding site" evidence="1">
    <location>
        <position position="71"/>
    </location>
    <ligand>
        <name>substrate</name>
    </ligand>
</feature>
<feature type="binding site" evidence="1">
    <location>
        <begin position="153"/>
        <end position="156"/>
    </location>
    <ligand>
        <name>substrate</name>
    </ligand>
</feature>
<feature type="binding site" evidence="1">
    <location>
        <position position="176"/>
    </location>
    <ligand>
        <name>substrate</name>
    </ligand>
</feature>
<feature type="binding site" evidence="1">
    <location>
        <begin position="181"/>
        <end position="182"/>
    </location>
    <ligand>
        <name>substrate</name>
    </ligand>
</feature>
<organism>
    <name type="scientific">Listeria innocua serovar 6a (strain ATCC BAA-680 / CLIP 11262)</name>
    <dbReference type="NCBI Taxonomy" id="272626"/>
    <lineage>
        <taxon>Bacteria</taxon>
        <taxon>Bacillati</taxon>
        <taxon>Bacillota</taxon>
        <taxon>Bacilli</taxon>
        <taxon>Bacillales</taxon>
        <taxon>Listeriaceae</taxon>
        <taxon>Listeria</taxon>
    </lineage>
</organism>
<sequence>MSKIIIATANKGKAKEFEKIFAKFNIEVATLADFPEIGEIEETGTTFAENAALKAETVASLLNQTVIADDSGLIVDVLNGAPGVYSARYAGVAHDDAKNNEKLLKNLEGVEPAKRTARFHCTLAVATPSEKTSFYTGEVEGVIAEQLCGTNGFGYDPLFFLPEFGLTMAEIPAEKKNEISHRANAIKQLEKDLAEVVEKVTKK</sequence>
<gene>
    <name type="ordered locus">lin1202</name>
</gene>
<reference key="1">
    <citation type="journal article" date="2001" name="Science">
        <title>Comparative genomics of Listeria species.</title>
        <authorList>
            <person name="Glaser P."/>
            <person name="Frangeul L."/>
            <person name="Buchrieser C."/>
            <person name="Rusniok C."/>
            <person name="Amend A."/>
            <person name="Baquero F."/>
            <person name="Berche P."/>
            <person name="Bloecker H."/>
            <person name="Brandt P."/>
            <person name="Chakraborty T."/>
            <person name="Charbit A."/>
            <person name="Chetouani F."/>
            <person name="Couve E."/>
            <person name="de Daruvar A."/>
            <person name="Dehoux P."/>
            <person name="Domann E."/>
            <person name="Dominguez-Bernal G."/>
            <person name="Duchaud E."/>
            <person name="Durant L."/>
            <person name="Dussurget O."/>
            <person name="Entian K.-D."/>
            <person name="Fsihi H."/>
            <person name="Garcia-del Portillo F."/>
            <person name="Garrido P."/>
            <person name="Gautier L."/>
            <person name="Goebel W."/>
            <person name="Gomez-Lopez N."/>
            <person name="Hain T."/>
            <person name="Hauf J."/>
            <person name="Jackson D."/>
            <person name="Jones L.-M."/>
            <person name="Kaerst U."/>
            <person name="Kreft J."/>
            <person name="Kuhn M."/>
            <person name="Kunst F."/>
            <person name="Kurapkat G."/>
            <person name="Madueno E."/>
            <person name="Maitournam A."/>
            <person name="Mata Vicente J."/>
            <person name="Ng E."/>
            <person name="Nedjari H."/>
            <person name="Nordsiek G."/>
            <person name="Novella S."/>
            <person name="de Pablos B."/>
            <person name="Perez-Diaz J.-C."/>
            <person name="Purcell R."/>
            <person name="Remmel B."/>
            <person name="Rose M."/>
            <person name="Schlueter T."/>
            <person name="Simoes N."/>
            <person name="Tierrez A."/>
            <person name="Vazquez-Boland J.-A."/>
            <person name="Voss H."/>
            <person name="Wehland J."/>
            <person name="Cossart P."/>
        </authorList>
    </citation>
    <scope>NUCLEOTIDE SEQUENCE [LARGE SCALE GENOMIC DNA]</scope>
    <source>
        <strain>ATCC BAA-680 / CLIP 11262</strain>
    </source>
</reference>
<name>IXTPA_LISIN</name>
<accession>Q92CH0</accession>
<evidence type="ECO:0000255" key="1">
    <source>
        <dbReference type="HAMAP-Rule" id="MF_01405"/>
    </source>
</evidence>
<dbReference type="EC" id="3.6.1.66" evidence="1"/>
<dbReference type="EMBL" id="AL596167">
    <property type="protein sequence ID" value="CAC96433.1"/>
    <property type="molecule type" value="Genomic_DNA"/>
</dbReference>
<dbReference type="PIR" id="AI1582">
    <property type="entry name" value="AI1582"/>
</dbReference>
<dbReference type="RefSeq" id="WP_010990825.1">
    <property type="nucleotide sequence ID" value="NC_003212.1"/>
</dbReference>
<dbReference type="SMR" id="Q92CH0"/>
<dbReference type="STRING" id="272626.gene:17565532"/>
<dbReference type="KEGG" id="lin:lin1202"/>
<dbReference type="eggNOG" id="COG0127">
    <property type="taxonomic scope" value="Bacteria"/>
</dbReference>
<dbReference type="HOGENOM" id="CLU_082080_0_2_9"/>
<dbReference type="OrthoDB" id="9807456at2"/>
<dbReference type="Proteomes" id="UP000002513">
    <property type="component" value="Chromosome"/>
</dbReference>
<dbReference type="GO" id="GO:0005829">
    <property type="term" value="C:cytosol"/>
    <property type="evidence" value="ECO:0007669"/>
    <property type="project" value="TreeGrafter"/>
</dbReference>
<dbReference type="GO" id="GO:0035870">
    <property type="term" value="F:dITP diphosphatase activity"/>
    <property type="evidence" value="ECO:0007669"/>
    <property type="project" value="RHEA"/>
</dbReference>
<dbReference type="GO" id="GO:0036220">
    <property type="term" value="F:ITP diphosphatase activity"/>
    <property type="evidence" value="ECO:0007669"/>
    <property type="project" value="UniProtKB-EC"/>
</dbReference>
<dbReference type="GO" id="GO:0046872">
    <property type="term" value="F:metal ion binding"/>
    <property type="evidence" value="ECO:0007669"/>
    <property type="project" value="UniProtKB-KW"/>
</dbReference>
<dbReference type="GO" id="GO:0000166">
    <property type="term" value="F:nucleotide binding"/>
    <property type="evidence" value="ECO:0007669"/>
    <property type="project" value="UniProtKB-KW"/>
</dbReference>
<dbReference type="GO" id="GO:0017111">
    <property type="term" value="F:ribonucleoside triphosphate phosphatase activity"/>
    <property type="evidence" value="ECO:0007669"/>
    <property type="project" value="InterPro"/>
</dbReference>
<dbReference type="GO" id="GO:0036222">
    <property type="term" value="F:XTP diphosphatase activity"/>
    <property type="evidence" value="ECO:0007669"/>
    <property type="project" value="RHEA"/>
</dbReference>
<dbReference type="GO" id="GO:0009117">
    <property type="term" value="P:nucleotide metabolic process"/>
    <property type="evidence" value="ECO:0007669"/>
    <property type="project" value="UniProtKB-KW"/>
</dbReference>
<dbReference type="GO" id="GO:0009146">
    <property type="term" value="P:purine nucleoside triphosphate catabolic process"/>
    <property type="evidence" value="ECO:0007669"/>
    <property type="project" value="UniProtKB-UniRule"/>
</dbReference>
<dbReference type="CDD" id="cd00515">
    <property type="entry name" value="HAM1"/>
    <property type="match status" value="1"/>
</dbReference>
<dbReference type="FunFam" id="3.90.950.10:FF:000001">
    <property type="entry name" value="dITP/XTP pyrophosphatase"/>
    <property type="match status" value="1"/>
</dbReference>
<dbReference type="Gene3D" id="3.90.950.10">
    <property type="match status" value="1"/>
</dbReference>
<dbReference type="HAMAP" id="MF_01405">
    <property type="entry name" value="Non_canon_purine_NTPase"/>
    <property type="match status" value="1"/>
</dbReference>
<dbReference type="InterPro" id="IPR020922">
    <property type="entry name" value="dITP/XTP_pyrophosphatase"/>
</dbReference>
<dbReference type="InterPro" id="IPR029001">
    <property type="entry name" value="ITPase-like_fam"/>
</dbReference>
<dbReference type="InterPro" id="IPR002637">
    <property type="entry name" value="RdgB/HAM1"/>
</dbReference>
<dbReference type="NCBIfam" id="NF011397">
    <property type="entry name" value="PRK14822.1"/>
    <property type="match status" value="1"/>
</dbReference>
<dbReference type="NCBIfam" id="TIGR00042">
    <property type="entry name" value="RdgB/HAM1 family non-canonical purine NTP pyrophosphatase"/>
    <property type="match status" value="1"/>
</dbReference>
<dbReference type="PANTHER" id="PTHR11067:SF9">
    <property type="entry name" value="INOSINE TRIPHOSPHATE PYROPHOSPHATASE"/>
    <property type="match status" value="1"/>
</dbReference>
<dbReference type="PANTHER" id="PTHR11067">
    <property type="entry name" value="INOSINE TRIPHOSPHATE PYROPHOSPHATASE/HAM1 PROTEIN"/>
    <property type="match status" value="1"/>
</dbReference>
<dbReference type="Pfam" id="PF01725">
    <property type="entry name" value="Ham1p_like"/>
    <property type="match status" value="1"/>
</dbReference>
<dbReference type="SUPFAM" id="SSF52972">
    <property type="entry name" value="ITPase-like"/>
    <property type="match status" value="1"/>
</dbReference>
<protein>
    <recommendedName>
        <fullName evidence="1">dITP/XTP pyrophosphatase</fullName>
        <ecNumber evidence="1">3.6.1.66</ecNumber>
    </recommendedName>
    <alternativeName>
        <fullName evidence="1">Non-canonical purine NTP pyrophosphatase</fullName>
    </alternativeName>
    <alternativeName>
        <fullName evidence="1">Non-standard purine NTP pyrophosphatase</fullName>
    </alternativeName>
    <alternativeName>
        <fullName evidence="1">Nucleoside-triphosphate diphosphatase</fullName>
    </alternativeName>
    <alternativeName>
        <fullName evidence="1">Nucleoside-triphosphate pyrophosphatase</fullName>
        <shortName evidence="1">NTPase</shortName>
    </alternativeName>
</protein>
<comment type="function">
    <text evidence="1">Pyrophosphatase that catalyzes the hydrolysis of nucleoside triphosphates to their monophosphate derivatives, with a high preference for the non-canonical purine nucleotides XTP (xanthosine triphosphate), dITP (deoxyinosine triphosphate) and ITP. Seems to function as a house-cleaning enzyme that removes non-canonical purine nucleotides from the nucleotide pool, thus preventing their incorporation into DNA/RNA and avoiding chromosomal lesions.</text>
</comment>
<comment type="catalytic activity">
    <reaction evidence="1">
        <text>XTP + H2O = XMP + diphosphate + H(+)</text>
        <dbReference type="Rhea" id="RHEA:28610"/>
        <dbReference type="ChEBI" id="CHEBI:15377"/>
        <dbReference type="ChEBI" id="CHEBI:15378"/>
        <dbReference type="ChEBI" id="CHEBI:33019"/>
        <dbReference type="ChEBI" id="CHEBI:57464"/>
        <dbReference type="ChEBI" id="CHEBI:61314"/>
        <dbReference type="EC" id="3.6.1.66"/>
    </reaction>
</comment>
<comment type="catalytic activity">
    <reaction evidence="1">
        <text>dITP + H2O = dIMP + diphosphate + H(+)</text>
        <dbReference type="Rhea" id="RHEA:28342"/>
        <dbReference type="ChEBI" id="CHEBI:15377"/>
        <dbReference type="ChEBI" id="CHEBI:15378"/>
        <dbReference type="ChEBI" id="CHEBI:33019"/>
        <dbReference type="ChEBI" id="CHEBI:61194"/>
        <dbReference type="ChEBI" id="CHEBI:61382"/>
        <dbReference type="EC" id="3.6.1.66"/>
    </reaction>
</comment>
<comment type="catalytic activity">
    <reaction evidence="1">
        <text>ITP + H2O = IMP + diphosphate + H(+)</text>
        <dbReference type="Rhea" id="RHEA:29399"/>
        <dbReference type="ChEBI" id="CHEBI:15377"/>
        <dbReference type="ChEBI" id="CHEBI:15378"/>
        <dbReference type="ChEBI" id="CHEBI:33019"/>
        <dbReference type="ChEBI" id="CHEBI:58053"/>
        <dbReference type="ChEBI" id="CHEBI:61402"/>
        <dbReference type="EC" id="3.6.1.66"/>
    </reaction>
</comment>
<comment type="cofactor">
    <cofactor evidence="1">
        <name>Mg(2+)</name>
        <dbReference type="ChEBI" id="CHEBI:18420"/>
    </cofactor>
    <text evidence="1">Binds 1 Mg(2+) ion per subunit.</text>
</comment>
<comment type="subunit">
    <text evidence="1">Homodimer.</text>
</comment>
<comment type="similarity">
    <text evidence="1">Belongs to the HAM1 NTPase family.</text>
</comment>
<proteinExistence type="inferred from homology"/>
<keyword id="KW-0378">Hydrolase</keyword>
<keyword id="KW-0460">Magnesium</keyword>
<keyword id="KW-0479">Metal-binding</keyword>
<keyword id="KW-0546">Nucleotide metabolism</keyword>
<keyword id="KW-0547">Nucleotide-binding</keyword>